<name>TDH_SALG2</name>
<reference key="1">
    <citation type="journal article" date="2008" name="Genome Res.">
        <title>Comparative genome analysis of Salmonella enteritidis PT4 and Salmonella gallinarum 287/91 provides insights into evolutionary and host adaptation pathways.</title>
        <authorList>
            <person name="Thomson N.R."/>
            <person name="Clayton D.J."/>
            <person name="Windhorst D."/>
            <person name="Vernikos G."/>
            <person name="Davidson S."/>
            <person name="Churcher C."/>
            <person name="Quail M.A."/>
            <person name="Stevens M."/>
            <person name="Jones M.A."/>
            <person name="Watson M."/>
            <person name="Barron A."/>
            <person name="Layton A."/>
            <person name="Pickard D."/>
            <person name="Kingsley R.A."/>
            <person name="Bignell A."/>
            <person name="Clark L."/>
            <person name="Harris B."/>
            <person name="Ormond D."/>
            <person name="Abdellah Z."/>
            <person name="Brooks K."/>
            <person name="Cherevach I."/>
            <person name="Chillingworth T."/>
            <person name="Woodward J."/>
            <person name="Norberczak H."/>
            <person name="Lord A."/>
            <person name="Arrowsmith C."/>
            <person name="Jagels K."/>
            <person name="Moule S."/>
            <person name="Mungall K."/>
            <person name="Saunders M."/>
            <person name="Whitehead S."/>
            <person name="Chabalgoity J.A."/>
            <person name="Maskell D."/>
            <person name="Humphreys T."/>
            <person name="Roberts M."/>
            <person name="Barrow P.A."/>
            <person name="Dougan G."/>
            <person name="Parkhill J."/>
        </authorList>
    </citation>
    <scope>NUCLEOTIDE SEQUENCE [LARGE SCALE GENOMIC DNA]</scope>
    <source>
        <strain>287/91 / NCTC 13346</strain>
    </source>
</reference>
<proteinExistence type="inferred from homology"/>
<dbReference type="EC" id="1.1.1.103" evidence="1"/>
<dbReference type="EMBL" id="AM933173">
    <property type="protein sequence ID" value="CAR39503.1"/>
    <property type="molecule type" value="Genomic_DNA"/>
</dbReference>
<dbReference type="RefSeq" id="WP_000645994.1">
    <property type="nucleotide sequence ID" value="NC_011274.1"/>
</dbReference>
<dbReference type="SMR" id="B5RGH0"/>
<dbReference type="KEGG" id="seg:SG3723"/>
<dbReference type="HOGENOM" id="CLU_026673_11_0_6"/>
<dbReference type="UniPathway" id="UPA00046">
    <property type="reaction ID" value="UER00505"/>
</dbReference>
<dbReference type="Proteomes" id="UP000008321">
    <property type="component" value="Chromosome"/>
</dbReference>
<dbReference type="GO" id="GO:0005737">
    <property type="term" value="C:cytoplasm"/>
    <property type="evidence" value="ECO:0007669"/>
    <property type="project" value="UniProtKB-SubCell"/>
</dbReference>
<dbReference type="GO" id="GO:0008743">
    <property type="term" value="F:L-threonine 3-dehydrogenase activity"/>
    <property type="evidence" value="ECO:0007669"/>
    <property type="project" value="UniProtKB-UniRule"/>
</dbReference>
<dbReference type="GO" id="GO:0008270">
    <property type="term" value="F:zinc ion binding"/>
    <property type="evidence" value="ECO:0007669"/>
    <property type="project" value="UniProtKB-UniRule"/>
</dbReference>
<dbReference type="GO" id="GO:0019518">
    <property type="term" value="P:L-threonine catabolic process to glycine"/>
    <property type="evidence" value="ECO:0007669"/>
    <property type="project" value="UniProtKB-UniPathway"/>
</dbReference>
<dbReference type="FunFam" id="3.40.50.720:FF:000059">
    <property type="entry name" value="L-threonine 3-dehydrogenase"/>
    <property type="match status" value="1"/>
</dbReference>
<dbReference type="Gene3D" id="3.90.180.10">
    <property type="entry name" value="Medium-chain alcohol dehydrogenases, catalytic domain"/>
    <property type="match status" value="1"/>
</dbReference>
<dbReference type="Gene3D" id="3.40.50.720">
    <property type="entry name" value="NAD(P)-binding Rossmann-like Domain"/>
    <property type="match status" value="1"/>
</dbReference>
<dbReference type="HAMAP" id="MF_00627">
    <property type="entry name" value="Thr_dehydrog"/>
    <property type="match status" value="1"/>
</dbReference>
<dbReference type="InterPro" id="IPR013149">
    <property type="entry name" value="ADH-like_C"/>
</dbReference>
<dbReference type="InterPro" id="IPR013154">
    <property type="entry name" value="ADH-like_N"/>
</dbReference>
<dbReference type="InterPro" id="IPR002328">
    <property type="entry name" value="ADH_Zn_CS"/>
</dbReference>
<dbReference type="InterPro" id="IPR011032">
    <property type="entry name" value="GroES-like_sf"/>
</dbReference>
<dbReference type="InterPro" id="IPR004627">
    <property type="entry name" value="L-Threonine_3-DHase"/>
</dbReference>
<dbReference type="InterPro" id="IPR036291">
    <property type="entry name" value="NAD(P)-bd_dom_sf"/>
</dbReference>
<dbReference type="InterPro" id="IPR020843">
    <property type="entry name" value="PKS_ER"/>
</dbReference>
<dbReference type="InterPro" id="IPR050129">
    <property type="entry name" value="Zn_alcohol_dh"/>
</dbReference>
<dbReference type="NCBIfam" id="NF003808">
    <property type="entry name" value="PRK05396.1"/>
    <property type="match status" value="1"/>
</dbReference>
<dbReference type="NCBIfam" id="TIGR00692">
    <property type="entry name" value="tdh"/>
    <property type="match status" value="1"/>
</dbReference>
<dbReference type="PANTHER" id="PTHR43401">
    <property type="entry name" value="L-THREONINE 3-DEHYDROGENASE"/>
    <property type="match status" value="1"/>
</dbReference>
<dbReference type="PANTHER" id="PTHR43401:SF2">
    <property type="entry name" value="L-THREONINE 3-DEHYDROGENASE"/>
    <property type="match status" value="1"/>
</dbReference>
<dbReference type="Pfam" id="PF08240">
    <property type="entry name" value="ADH_N"/>
    <property type="match status" value="1"/>
</dbReference>
<dbReference type="Pfam" id="PF00107">
    <property type="entry name" value="ADH_zinc_N"/>
    <property type="match status" value="1"/>
</dbReference>
<dbReference type="SMART" id="SM00829">
    <property type="entry name" value="PKS_ER"/>
    <property type="match status" value="1"/>
</dbReference>
<dbReference type="SUPFAM" id="SSF50129">
    <property type="entry name" value="GroES-like"/>
    <property type="match status" value="1"/>
</dbReference>
<dbReference type="SUPFAM" id="SSF51735">
    <property type="entry name" value="NAD(P)-binding Rossmann-fold domains"/>
    <property type="match status" value="1"/>
</dbReference>
<dbReference type="PROSITE" id="PS00059">
    <property type="entry name" value="ADH_ZINC"/>
    <property type="match status" value="1"/>
</dbReference>
<comment type="function">
    <text evidence="1">Catalyzes the NAD(+)-dependent oxidation of L-threonine to 2-amino-3-ketobutyrate.</text>
</comment>
<comment type="catalytic activity">
    <reaction evidence="1">
        <text>L-threonine + NAD(+) = (2S)-2-amino-3-oxobutanoate + NADH + H(+)</text>
        <dbReference type="Rhea" id="RHEA:13161"/>
        <dbReference type="ChEBI" id="CHEBI:15378"/>
        <dbReference type="ChEBI" id="CHEBI:57540"/>
        <dbReference type="ChEBI" id="CHEBI:57926"/>
        <dbReference type="ChEBI" id="CHEBI:57945"/>
        <dbReference type="ChEBI" id="CHEBI:78948"/>
        <dbReference type="EC" id="1.1.1.103"/>
    </reaction>
</comment>
<comment type="cofactor">
    <cofactor evidence="1">
        <name>Zn(2+)</name>
        <dbReference type="ChEBI" id="CHEBI:29105"/>
    </cofactor>
    <text evidence="1">Binds 2 Zn(2+) ions per subunit.</text>
</comment>
<comment type="pathway">
    <text evidence="1">Amino-acid degradation; L-threonine degradation via oxydo-reductase pathway; glycine from L-threonine: step 1/2.</text>
</comment>
<comment type="subunit">
    <text evidence="1">Homotetramer.</text>
</comment>
<comment type="subcellular location">
    <subcellularLocation>
        <location evidence="1">Cytoplasm</location>
    </subcellularLocation>
</comment>
<comment type="similarity">
    <text evidence="1">Belongs to the zinc-containing alcohol dehydrogenase family.</text>
</comment>
<organism>
    <name type="scientific">Salmonella gallinarum (strain 287/91 / NCTC 13346)</name>
    <dbReference type="NCBI Taxonomy" id="550538"/>
    <lineage>
        <taxon>Bacteria</taxon>
        <taxon>Pseudomonadati</taxon>
        <taxon>Pseudomonadota</taxon>
        <taxon>Gammaproteobacteria</taxon>
        <taxon>Enterobacterales</taxon>
        <taxon>Enterobacteriaceae</taxon>
        <taxon>Salmonella</taxon>
    </lineage>
</organism>
<keyword id="KW-0963">Cytoplasm</keyword>
<keyword id="KW-0479">Metal-binding</keyword>
<keyword id="KW-0520">NAD</keyword>
<keyword id="KW-0560">Oxidoreductase</keyword>
<keyword id="KW-0862">Zinc</keyword>
<protein>
    <recommendedName>
        <fullName evidence="1">L-threonine 3-dehydrogenase</fullName>
        <shortName evidence="1">TDH</shortName>
        <ecNumber evidence="1">1.1.1.103</ecNumber>
    </recommendedName>
</protein>
<feature type="chain" id="PRO_1000130561" description="L-threonine 3-dehydrogenase">
    <location>
        <begin position="1"/>
        <end position="341"/>
    </location>
</feature>
<feature type="active site" description="Charge relay system" evidence="1">
    <location>
        <position position="40"/>
    </location>
</feature>
<feature type="active site" description="Charge relay system" evidence="1">
    <location>
        <position position="43"/>
    </location>
</feature>
<feature type="binding site" evidence="1">
    <location>
        <position position="38"/>
    </location>
    <ligand>
        <name>Zn(2+)</name>
        <dbReference type="ChEBI" id="CHEBI:29105"/>
        <label>1</label>
        <note>catalytic</note>
    </ligand>
</feature>
<feature type="binding site" evidence="1">
    <location>
        <position position="63"/>
    </location>
    <ligand>
        <name>Zn(2+)</name>
        <dbReference type="ChEBI" id="CHEBI:29105"/>
        <label>1</label>
        <note>catalytic</note>
    </ligand>
</feature>
<feature type="binding site" evidence="1">
    <location>
        <position position="64"/>
    </location>
    <ligand>
        <name>Zn(2+)</name>
        <dbReference type="ChEBI" id="CHEBI:29105"/>
        <label>1</label>
        <note>catalytic</note>
    </ligand>
</feature>
<feature type="binding site" evidence="1">
    <location>
        <position position="93"/>
    </location>
    <ligand>
        <name>Zn(2+)</name>
        <dbReference type="ChEBI" id="CHEBI:29105"/>
        <label>2</label>
    </ligand>
</feature>
<feature type="binding site" evidence="1">
    <location>
        <position position="96"/>
    </location>
    <ligand>
        <name>Zn(2+)</name>
        <dbReference type="ChEBI" id="CHEBI:29105"/>
        <label>2</label>
    </ligand>
</feature>
<feature type="binding site" evidence="1">
    <location>
        <position position="99"/>
    </location>
    <ligand>
        <name>Zn(2+)</name>
        <dbReference type="ChEBI" id="CHEBI:29105"/>
        <label>2</label>
    </ligand>
</feature>
<feature type="binding site" evidence="1">
    <location>
        <position position="107"/>
    </location>
    <ligand>
        <name>Zn(2+)</name>
        <dbReference type="ChEBI" id="CHEBI:29105"/>
        <label>2</label>
    </ligand>
</feature>
<feature type="binding site" evidence="1">
    <location>
        <position position="175"/>
    </location>
    <ligand>
        <name>NAD(+)</name>
        <dbReference type="ChEBI" id="CHEBI:57540"/>
    </ligand>
</feature>
<feature type="binding site" evidence="1">
    <location>
        <position position="195"/>
    </location>
    <ligand>
        <name>NAD(+)</name>
        <dbReference type="ChEBI" id="CHEBI:57540"/>
    </ligand>
</feature>
<feature type="binding site" evidence="1">
    <location>
        <position position="200"/>
    </location>
    <ligand>
        <name>NAD(+)</name>
        <dbReference type="ChEBI" id="CHEBI:57540"/>
    </ligand>
</feature>
<feature type="binding site" evidence="1">
    <location>
        <begin position="262"/>
        <end position="264"/>
    </location>
    <ligand>
        <name>NAD(+)</name>
        <dbReference type="ChEBI" id="CHEBI:57540"/>
    </ligand>
</feature>
<feature type="binding site" evidence="1">
    <location>
        <begin position="286"/>
        <end position="287"/>
    </location>
    <ligand>
        <name>NAD(+)</name>
        <dbReference type="ChEBI" id="CHEBI:57540"/>
    </ligand>
</feature>
<feature type="site" description="Important for catalytic activity for the proton relay mechanism but does not participate directly in the coordination of zinc atom" evidence="1">
    <location>
        <position position="148"/>
    </location>
</feature>
<accession>B5RGH0</accession>
<evidence type="ECO:0000255" key="1">
    <source>
        <dbReference type="HAMAP-Rule" id="MF_00627"/>
    </source>
</evidence>
<gene>
    <name evidence="1" type="primary">tdh</name>
    <name type="ordered locus">SG3723</name>
</gene>
<sequence>MKALSKLKAEEGIWMTDVPEPEVGHNDLLIKIRKTAICGTDVHIYNWDDWSQKTIPVPMVVGHEYVGEVVGIGQEVKGFKIGDRVSGEGHITCGHCRNCRGGRTHLCRNTTGVGVNRPGCFAEYLVIPALNAFKIPDNISDDLASIFDPFGNAVHTALSFDLVGEDVLVSGAGPIGVMAAAVAKHVGARHVVITDVNEYRLELARKMGVTRAVNVAKESLNDVMAELGMTEGFDVGLEMSGAPPAFCTMLDTMNHGGRIAMLGIPPSDMSIDWTKVIFKGLFIKGIYGREMFETWYKMAALIQSGLDLSPIITHRFSIDDFQKGFDAMRSGQSGKVILSWD</sequence>